<keyword id="KW-0131">Cell cycle</keyword>
<keyword id="KW-0132">Cell division</keyword>
<keyword id="KW-0997">Cell inner membrane</keyword>
<keyword id="KW-1003">Cell membrane</keyword>
<keyword id="KW-0133">Cell shape</keyword>
<keyword id="KW-0961">Cell wall biogenesis/degradation</keyword>
<keyword id="KW-0460">Magnesium</keyword>
<keyword id="KW-0472">Membrane</keyword>
<keyword id="KW-0479">Metal-binding</keyword>
<keyword id="KW-0573">Peptidoglycan synthesis</keyword>
<keyword id="KW-0808">Transferase</keyword>
<keyword id="KW-0812">Transmembrane</keyword>
<keyword id="KW-1133">Transmembrane helix</keyword>
<evidence type="ECO:0000255" key="1">
    <source>
        <dbReference type="HAMAP-Rule" id="MF_00038"/>
    </source>
</evidence>
<accession>B3EIL1</accession>
<name>MRAY_CHLL2</name>
<reference key="1">
    <citation type="submission" date="2008-05" db="EMBL/GenBank/DDBJ databases">
        <title>Complete sequence of Chlorobium limicola DSM 245.</title>
        <authorList>
            <consortium name="US DOE Joint Genome Institute"/>
            <person name="Lucas S."/>
            <person name="Copeland A."/>
            <person name="Lapidus A."/>
            <person name="Glavina del Rio T."/>
            <person name="Dalin E."/>
            <person name="Tice H."/>
            <person name="Bruce D."/>
            <person name="Goodwin L."/>
            <person name="Pitluck S."/>
            <person name="Schmutz J."/>
            <person name="Larimer F."/>
            <person name="Land M."/>
            <person name="Hauser L."/>
            <person name="Kyrpides N."/>
            <person name="Ovchinnikova G."/>
            <person name="Zhao F."/>
            <person name="Li T."/>
            <person name="Liu Z."/>
            <person name="Overmann J."/>
            <person name="Bryant D.A."/>
            <person name="Richardson P."/>
        </authorList>
    </citation>
    <scope>NUCLEOTIDE SEQUENCE [LARGE SCALE GENOMIC DNA]</scope>
    <source>
        <strain>DSM 245 / NBRC 103803 / 6330</strain>
    </source>
</reference>
<feature type="chain" id="PRO_1000090606" description="Phospho-N-acetylmuramoyl-pentapeptide-transferase">
    <location>
        <begin position="1"/>
        <end position="368"/>
    </location>
</feature>
<feature type="transmembrane region" description="Helical" evidence="1">
    <location>
        <begin position="30"/>
        <end position="50"/>
    </location>
</feature>
<feature type="transmembrane region" description="Helical" evidence="1">
    <location>
        <begin position="72"/>
        <end position="92"/>
    </location>
</feature>
<feature type="transmembrane region" description="Helical" evidence="1">
    <location>
        <begin position="99"/>
        <end position="119"/>
    </location>
</feature>
<feature type="transmembrane region" description="Helical" evidence="1">
    <location>
        <begin position="139"/>
        <end position="159"/>
    </location>
</feature>
<feature type="transmembrane region" description="Helical" evidence="1">
    <location>
        <begin position="170"/>
        <end position="190"/>
    </location>
</feature>
<feature type="transmembrane region" description="Helical" evidence="1">
    <location>
        <begin position="201"/>
        <end position="221"/>
    </location>
</feature>
<feature type="transmembrane region" description="Helical" evidence="1">
    <location>
        <begin position="238"/>
        <end position="258"/>
    </location>
</feature>
<feature type="transmembrane region" description="Helical" evidence="1">
    <location>
        <begin position="264"/>
        <end position="286"/>
    </location>
</feature>
<feature type="transmembrane region" description="Helical" evidence="1">
    <location>
        <begin position="345"/>
        <end position="365"/>
    </location>
</feature>
<organism>
    <name type="scientific">Chlorobium limicola (strain DSM 245 / NBRC 103803 / 6330)</name>
    <dbReference type="NCBI Taxonomy" id="290315"/>
    <lineage>
        <taxon>Bacteria</taxon>
        <taxon>Pseudomonadati</taxon>
        <taxon>Chlorobiota</taxon>
        <taxon>Chlorobiia</taxon>
        <taxon>Chlorobiales</taxon>
        <taxon>Chlorobiaceae</taxon>
        <taxon>Chlorobium/Pelodictyon group</taxon>
        <taxon>Chlorobium</taxon>
    </lineage>
</organism>
<dbReference type="EC" id="2.7.8.13" evidence="1"/>
<dbReference type="EMBL" id="CP001097">
    <property type="protein sequence ID" value="ACD91523.1"/>
    <property type="molecule type" value="Genomic_DNA"/>
</dbReference>
<dbReference type="RefSeq" id="WP_012467387.1">
    <property type="nucleotide sequence ID" value="NC_010803.1"/>
</dbReference>
<dbReference type="SMR" id="B3EIL1"/>
<dbReference type="STRING" id="290315.Clim_2505"/>
<dbReference type="KEGG" id="cli:Clim_2505"/>
<dbReference type="eggNOG" id="COG0472">
    <property type="taxonomic scope" value="Bacteria"/>
</dbReference>
<dbReference type="HOGENOM" id="CLU_023982_0_0_10"/>
<dbReference type="OrthoDB" id="9805475at2"/>
<dbReference type="UniPathway" id="UPA00219"/>
<dbReference type="Proteomes" id="UP000008841">
    <property type="component" value="Chromosome"/>
</dbReference>
<dbReference type="GO" id="GO:0005886">
    <property type="term" value="C:plasma membrane"/>
    <property type="evidence" value="ECO:0007669"/>
    <property type="project" value="UniProtKB-SubCell"/>
</dbReference>
<dbReference type="GO" id="GO:0046872">
    <property type="term" value="F:metal ion binding"/>
    <property type="evidence" value="ECO:0007669"/>
    <property type="project" value="UniProtKB-KW"/>
</dbReference>
<dbReference type="GO" id="GO:0008963">
    <property type="term" value="F:phospho-N-acetylmuramoyl-pentapeptide-transferase activity"/>
    <property type="evidence" value="ECO:0007669"/>
    <property type="project" value="UniProtKB-UniRule"/>
</dbReference>
<dbReference type="GO" id="GO:0051992">
    <property type="term" value="F:UDP-N-acetylmuramoyl-L-alanyl-D-glutamyl-meso-2,6-diaminopimelyl-D-alanyl-D-alanine:undecaprenyl-phosphate transferase activity"/>
    <property type="evidence" value="ECO:0007669"/>
    <property type="project" value="RHEA"/>
</dbReference>
<dbReference type="GO" id="GO:0051301">
    <property type="term" value="P:cell division"/>
    <property type="evidence" value="ECO:0007669"/>
    <property type="project" value="UniProtKB-KW"/>
</dbReference>
<dbReference type="GO" id="GO:0071555">
    <property type="term" value="P:cell wall organization"/>
    <property type="evidence" value="ECO:0007669"/>
    <property type="project" value="UniProtKB-KW"/>
</dbReference>
<dbReference type="GO" id="GO:0009252">
    <property type="term" value="P:peptidoglycan biosynthetic process"/>
    <property type="evidence" value="ECO:0007669"/>
    <property type="project" value="UniProtKB-UniRule"/>
</dbReference>
<dbReference type="GO" id="GO:0008360">
    <property type="term" value="P:regulation of cell shape"/>
    <property type="evidence" value="ECO:0007669"/>
    <property type="project" value="UniProtKB-KW"/>
</dbReference>
<dbReference type="CDD" id="cd06852">
    <property type="entry name" value="GT_MraY"/>
    <property type="match status" value="1"/>
</dbReference>
<dbReference type="HAMAP" id="MF_00038">
    <property type="entry name" value="MraY"/>
    <property type="match status" value="1"/>
</dbReference>
<dbReference type="InterPro" id="IPR000715">
    <property type="entry name" value="Glycosyl_transferase_4"/>
</dbReference>
<dbReference type="InterPro" id="IPR003524">
    <property type="entry name" value="PNAcMuramoyl-5peptid_Trfase"/>
</dbReference>
<dbReference type="InterPro" id="IPR018480">
    <property type="entry name" value="PNAcMuramoyl-5peptid_Trfase_CS"/>
</dbReference>
<dbReference type="NCBIfam" id="TIGR00445">
    <property type="entry name" value="mraY"/>
    <property type="match status" value="1"/>
</dbReference>
<dbReference type="PANTHER" id="PTHR22926">
    <property type="entry name" value="PHOSPHO-N-ACETYLMURAMOYL-PENTAPEPTIDE-TRANSFERASE"/>
    <property type="match status" value="1"/>
</dbReference>
<dbReference type="PANTHER" id="PTHR22926:SF5">
    <property type="entry name" value="PHOSPHO-N-ACETYLMURAMOYL-PENTAPEPTIDE-TRANSFERASE HOMOLOG"/>
    <property type="match status" value="1"/>
</dbReference>
<dbReference type="Pfam" id="PF00953">
    <property type="entry name" value="Glycos_transf_4"/>
    <property type="match status" value="1"/>
</dbReference>
<dbReference type="PROSITE" id="PS01348">
    <property type="entry name" value="MRAY_2"/>
    <property type="match status" value="1"/>
</dbReference>
<gene>
    <name evidence="1" type="primary">mraY</name>
    <name type="ordered locus">Clim_2505</name>
</gene>
<proteinExistence type="inferred from homology"/>
<comment type="function">
    <text evidence="1">Catalyzes the initial step of the lipid cycle reactions in the biosynthesis of the cell wall peptidoglycan: transfers peptidoglycan precursor phospho-MurNAc-pentapeptide from UDP-MurNAc-pentapeptide onto the lipid carrier undecaprenyl phosphate, yielding undecaprenyl-pyrophosphoryl-MurNAc-pentapeptide, known as lipid I.</text>
</comment>
<comment type="catalytic activity">
    <reaction evidence="1">
        <text>UDP-N-acetyl-alpha-D-muramoyl-L-alanyl-gamma-D-glutamyl-meso-2,6-diaminopimeloyl-D-alanyl-D-alanine + di-trans,octa-cis-undecaprenyl phosphate = di-trans,octa-cis-undecaprenyl diphospho-N-acetyl-alpha-D-muramoyl-L-alanyl-D-glutamyl-meso-2,6-diaminopimeloyl-D-alanyl-D-alanine + UMP</text>
        <dbReference type="Rhea" id="RHEA:28386"/>
        <dbReference type="ChEBI" id="CHEBI:57865"/>
        <dbReference type="ChEBI" id="CHEBI:60392"/>
        <dbReference type="ChEBI" id="CHEBI:61386"/>
        <dbReference type="ChEBI" id="CHEBI:61387"/>
        <dbReference type="EC" id="2.7.8.13"/>
    </reaction>
</comment>
<comment type="cofactor">
    <cofactor evidence="1">
        <name>Mg(2+)</name>
        <dbReference type="ChEBI" id="CHEBI:18420"/>
    </cofactor>
</comment>
<comment type="pathway">
    <text evidence="1">Cell wall biogenesis; peptidoglycan biosynthesis.</text>
</comment>
<comment type="subcellular location">
    <subcellularLocation>
        <location evidence="1">Cell inner membrane</location>
        <topology evidence="1">Multi-pass membrane protein</topology>
    </subcellularLocation>
</comment>
<comment type="similarity">
    <text evidence="1">Belongs to the glycosyltransferase 4 family. MraY subfamily.</text>
</comment>
<sequence>MLYYLLKYINDAFDPPGLGVIEFLTFRASAAAVTSLLICLVAGPAFIKYLKGRIIEPVKEEAPPEHRKKKELPTMGGIMIIFAIEVSVFLWARFDDPHVWLIMVAVFWMGVIGFLDDYMKVVLKVKGGLPPRYKLIGQVLLGLFIGLYTWFDPAFSVLLSTTTVPFFKNLTIDYGIFYIPVVIFIITAVSNAVNLTDGLDGLASGSSAIVVFALGGFAYLAGNAVYASYLKIPFIPGGGEIAVVSMAIVMACVGFLWFNSNPAEIIMGDTGSLALGSAIAVIALLIKQELLLPVLAGIFFLETLSVSLQVLYFKYTKMRFGQGRRIFLMAPLHHHFQLKGWAEQKIVIRFWIVTVLFFLASLMTLKLR</sequence>
<protein>
    <recommendedName>
        <fullName evidence="1">Phospho-N-acetylmuramoyl-pentapeptide-transferase</fullName>
        <ecNumber evidence="1">2.7.8.13</ecNumber>
    </recommendedName>
    <alternativeName>
        <fullName evidence="1">UDP-MurNAc-pentapeptide phosphotransferase</fullName>
    </alternativeName>
</protein>